<organism>
    <name type="scientific">Clavispora lusitaniae (strain ATCC 42720)</name>
    <name type="common">Yeast</name>
    <name type="synonym">Candida lusitaniae</name>
    <dbReference type="NCBI Taxonomy" id="306902"/>
    <lineage>
        <taxon>Eukaryota</taxon>
        <taxon>Fungi</taxon>
        <taxon>Dikarya</taxon>
        <taxon>Ascomycota</taxon>
        <taxon>Saccharomycotina</taxon>
        <taxon>Pichiomycetes</taxon>
        <taxon>Metschnikowiaceae</taxon>
        <taxon>Clavispora</taxon>
    </lineage>
</organism>
<accession>C4Y2M6</accession>
<keyword id="KW-0539">Nucleus</keyword>
<keyword id="KW-1185">Reference proteome</keyword>
<keyword id="KW-0804">Transcription</keyword>
<keyword id="KW-0805">Transcription regulation</keyword>
<name>RRT14_CLAL4</name>
<sequence>MAFSSASSKARSKASVNKLFESMLPGTSLLPSSSGKSSATEKFAAQVNKKKLTKHEIQKAHKVEKAKKNKLINQKLEKEKKFKKLVKFNVIKAHKEEKDLTPEEQKYLKKLIKKNANAVVRASEVDDPFVKDEIDALRSEILALTNEKYDKSRDRKLDAKLQSFNDKIKKGVLAYPGLTPGLAPVGYDDESDEE</sequence>
<feature type="chain" id="PRO_0000404340" description="Regulator of rDNA transcription 14">
    <location>
        <begin position="1"/>
        <end position="194"/>
    </location>
</feature>
<reference key="1">
    <citation type="journal article" date="2009" name="Nature">
        <title>Evolution of pathogenicity and sexual reproduction in eight Candida genomes.</title>
        <authorList>
            <person name="Butler G."/>
            <person name="Rasmussen M.D."/>
            <person name="Lin M.F."/>
            <person name="Santos M.A.S."/>
            <person name="Sakthikumar S."/>
            <person name="Munro C.A."/>
            <person name="Rheinbay E."/>
            <person name="Grabherr M."/>
            <person name="Forche A."/>
            <person name="Reedy J.L."/>
            <person name="Agrafioti I."/>
            <person name="Arnaud M.B."/>
            <person name="Bates S."/>
            <person name="Brown A.J.P."/>
            <person name="Brunke S."/>
            <person name="Costanzo M.C."/>
            <person name="Fitzpatrick D.A."/>
            <person name="de Groot P.W.J."/>
            <person name="Harris D."/>
            <person name="Hoyer L.L."/>
            <person name="Hube B."/>
            <person name="Klis F.M."/>
            <person name="Kodira C."/>
            <person name="Lennard N."/>
            <person name="Logue M.E."/>
            <person name="Martin R."/>
            <person name="Neiman A.M."/>
            <person name="Nikolaou E."/>
            <person name="Quail M.A."/>
            <person name="Quinn J."/>
            <person name="Santos M.C."/>
            <person name="Schmitzberger F.F."/>
            <person name="Sherlock G."/>
            <person name="Shah P."/>
            <person name="Silverstein K.A.T."/>
            <person name="Skrzypek M.S."/>
            <person name="Soll D."/>
            <person name="Staggs R."/>
            <person name="Stansfield I."/>
            <person name="Stumpf M.P.H."/>
            <person name="Sudbery P.E."/>
            <person name="Srikantha T."/>
            <person name="Zeng Q."/>
            <person name="Berman J."/>
            <person name="Berriman M."/>
            <person name="Heitman J."/>
            <person name="Gow N.A.R."/>
            <person name="Lorenz M.C."/>
            <person name="Birren B.W."/>
            <person name="Kellis M."/>
            <person name="Cuomo C.A."/>
        </authorList>
    </citation>
    <scope>NUCLEOTIDE SEQUENCE [LARGE SCALE GENOMIC DNA]</scope>
    <source>
        <strain>ATCC 42720</strain>
    </source>
</reference>
<proteinExistence type="inferred from homology"/>
<comment type="function">
    <text evidence="1">Involved in ribosome biogenesis, probably through modulation of rDNA transcription.</text>
</comment>
<comment type="subcellular location">
    <subcellularLocation>
        <location evidence="1">Nucleus</location>
        <location evidence="1">Nucleolus</location>
    </subcellularLocation>
</comment>
<comment type="similarity">
    <text evidence="2">Belongs to the RRT14 family.</text>
</comment>
<dbReference type="EMBL" id="CH408078">
    <property type="protein sequence ID" value="EEQ38663.1"/>
    <property type="molecule type" value="Genomic_DNA"/>
</dbReference>
<dbReference type="RefSeq" id="XP_002617345.1">
    <property type="nucleotide sequence ID" value="XM_002617299.1"/>
</dbReference>
<dbReference type="SMR" id="C4Y2M6"/>
<dbReference type="FunCoup" id="C4Y2M6">
    <property type="interactions" value="239"/>
</dbReference>
<dbReference type="STRING" id="306902.C4Y2M6"/>
<dbReference type="GeneID" id="8497701"/>
<dbReference type="KEGG" id="clu:CLUG_02789"/>
<dbReference type="VEuPathDB" id="FungiDB:CLUG_02789"/>
<dbReference type="HOGENOM" id="CLU_095038_0_0_1"/>
<dbReference type="InParanoid" id="C4Y2M6"/>
<dbReference type="OMA" id="LNNTKQV"/>
<dbReference type="OrthoDB" id="99863at4891"/>
<dbReference type="Proteomes" id="UP000007703">
    <property type="component" value="Unassembled WGS sequence"/>
</dbReference>
<dbReference type="GO" id="GO:0005730">
    <property type="term" value="C:nucleolus"/>
    <property type="evidence" value="ECO:0007669"/>
    <property type="project" value="UniProtKB-SubCell"/>
</dbReference>
<dbReference type="InterPro" id="IPR031404">
    <property type="entry name" value="Rrt14"/>
</dbReference>
<dbReference type="Pfam" id="PF17075">
    <property type="entry name" value="RRT14"/>
    <property type="match status" value="1"/>
</dbReference>
<gene>
    <name type="primary">RRT14</name>
    <name type="ORF">CLUG_02789</name>
</gene>
<evidence type="ECO:0000250" key="1"/>
<evidence type="ECO:0000305" key="2"/>
<protein>
    <recommendedName>
        <fullName>Regulator of rDNA transcription 14</fullName>
    </recommendedName>
</protein>